<reference key="1">
    <citation type="journal article" date="1997" name="Mol. Phylogenet. Evol.">
        <title>Molecular phylogeny of rodents, with special emphasis on murids: evidence from nuclear gene LCAT.</title>
        <authorList>
            <person name="Robinson M."/>
            <person name="Catzeflis F."/>
            <person name="Briolay J."/>
            <person name="Mouchiroud D."/>
        </authorList>
    </citation>
    <scope>NUCLEOTIDE SEQUENCE [GENOMIC DNA]</scope>
</reference>
<dbReference type="EC" id="2.3.1.43" evidence="2"/>
<dbReference type="EMBL" id="U72298">
    <property type="protein sequence ID" value="AAB58989.1"/>
    <property type="molecule type" value="Genomic_DNA"/>
</dbReference>
<dbReference type="EMBL" id="U72297">
    <property type="protein sequence ID" value="AAB58989.1"/>
    <property type="status" value="JOINED"/>
    <property type="molecule type" value="Genomic_DNA"/>
</dbReference>
<dbReference type="SMR" id="O35840"/>
<dbReference type="GlyCosmos" id="O35840">
    <property type="glycosylation" value="3 sites, No reported glycans"/>
</dbReference>
<dbReference type="GO" id="GO:0005576">
    <property type="term" value="C:extracellular region"/>
    <property type="evidence" value="ECO:0007669"/>
    <property type="project" value="UniProtKB-SubCell"/>
</dbReference>
<dbReference type="GO" id="GO:0004607">
    <property type="term" value="F:phosphatidylcholine-sterol O-acyltransferase activity"/>
    <property type="evidence" value="ECO:0000250"/>
    <property type="project" value="UniProtKB"/>
</dbReference>
<dbReference type="GO" id="GO:0008203">
    <property type="term" value="P:cholesterol metabolic process"/>
    <property type="evidence" value="ECO:0000250"/>
    <property type="project" value="UniProtKB"/>
</dbReference>
<dbReference type="GO" id="GO:0046470">
    <property type="term" value="P:phosphatidylcholine metabolic process"/>
    <property type="evidence" value="ECO:0000250"/>
    <property type="project" value="UniProtKB"/>
</dbReference>
<dbReference type="FunFam" id="3.40.50.1820:FF:000720">
    <property type="entry name" value="Phosphatidylcholine-sterol acyltransferase"/>
    <property type="match status" value="1"/>
</dbReference>
<dbReference type="Gene3D" id="3.40.50.1820">
    <property type="entry name" value="alpha/beta hydrolase"/>
    <property type="match status" value="2"/>
</dbReference>
<dbReference type="InterPro" id="IPR029058">
    <property type="entry name" value="AB_hydrolase_fold"/>
</dbReference>
<dbReference type="InterPro" id="IPR003386">
    <property type="entry name" value="LACT/PDAT_acylTrfase"/>
</dbReference>
<dbReference type="PANTHER" id="PTHR11440">
    <property type="entry name" value="LECITHIN-CHOLESTEROL ACYLTRANSFERASE-RELATED"/>
    <property type="match status" value="1"/>
</dbReference>
<dbReference type="Pfam" id="PF02450">
    <property type="entry name" value="LCAT"/>
    <property type="match status" value="2"/>
</dbReference>
<dbReference type="SUPFAM" id="SSF53474">
    <property type="entry name" value="alpha/beta-Hydrolases"/>
    <property type="match status" value="1"/>
</dbReference>
<dbReference type="PROSITE" id="PS00120">
    <property type="entry name" value="LIPASE_SER"/>
    <property type="match status" value="1"/>
</dbReference>
<feature type="chain" id="PRO_0000090362" description="Phosphatidylcholine-sterol acyltransferase">
    <location>
        <begin position="1" status="less than"/>
        <end position="293" status="greater than"/>
    </location>
</feature>
<feature type="active site" description="Nucleophile" evidence="2">
    <location>
        <position position="123"/>
    </location>
</feature>
<feature type="active site" description="Charge relay system" evidence="2">
    <location>
        <position position="252"/>
    </location>
</feature>
<feature type="active site" description="Charge relay system" evidence="2">
    <location>
        <position position="284"/>
    </location>
</feature>
<feature type="site" description="Determinant for substrate specificity" evidence="2">
    <location>
        <position position="91"/>
    </location>
</feature>
<feature type="glycosylation site" description="N-linked (GlcNAc...) asparagine" evidence="3">
    <location>
        <position position="26"/>
    </location>
</feature>
<feature type="glycosylation site" description="N-linked (GlcNAc...) asparagine" evidence="3">
    <location>
        <position position="179"/>
    </location>
</feature>
<feature type="glycosylation site" description="N-linked (GlcNAc...) asparagine" evidence="3">
    <location>
        <position position="280"/>
    </location>
</feature>
<feature type="disulfide bond" evidence="2">
    <location>
        <begin position="220"/>
        <end position="263"/>
    </location>
</feature>
<feature type="non-terminal residue">
    <location>
        <position position="1"/>
    </location>
</feature>
<feature type="non-terminal residue">
    <location>
        <position position="293"/>
    </location>
</feature>
<accession>O35840</accession>
<name>LCAT_GERGM</name>
<sequence>TIWLDLNMFLSLGVDCWIDNTRVVYNRSSGRVSNAPGVEIRVPGFGKTYSVEYLDDNKLAEYMHTLVQNLVNNGYVRDETVRAAPYDWRLEPSQQDDYYQKLAGLIEEMYAAYGKPVFLIGHSLGCLHVLYFLLRQGIPIMSSIKLREEQRITTTSPWMFPDRDVWPEDHVFISTPEFNYTGQDFERFFSDLHFEEGWYMWLQSRDLLAGLPAPGVDVYCLYGVGLPTPHTYIYDHNFPYKDPVAALYEDGDDTVATRSTELCGQWQGRQSQPVHLLPMNGTEHLNMVFSNKT</sequence>
<gene>
    <name type="primary">LCAT</name>
</gene>
<proteinExistence type="inferred from homology"/>
<comment type="function">
    <text evidence="2">Central enzyme in the extracellular metabolism of plasma lipoproteins. Synthesized mainly in the liver and secreted into plasma where it converts cholesterol and phosphatidylcholines (lecithins) to cholesteryl esters and lysophosphatidylcholines on the surface of high and low density lipoproteins (HDLs and LDLs). The cholesterol ester is then transported back to the liver. Has a preference for plasma 16:0-18:2 or 18:O-18:2 phosphatidylcholines. Also produced in the brain by primary astrocytes, and esterifies free cholesterol on nascent APOE-containing lipoproteins secreted from glia and influences cerebral spinal fluid (CSF) APOE- and APOA1 levels. Together with APOE and the cholesterol transporter ABCA1, plays a key role in the maturation of glial-derived, nascent lipoproteins. Required for remodeling high-density lipoprotein particles into their spherical forms (By similarity).</text>
</comment>
<comment type="catalytic activity">
    <reaction evidence="2 4">
        <text>a sterol + a 1,2-diacyl-sn-glycero-3-phosphocholine = a sterol ester + a 1-acyl-sn-glycero-3-phosphocholine</text>
        <dbReference type="Rhea" id="RHEA:21204"/>
        <dbReference type="ChEBI" id="CHEBI:15889"/>
        <dbReference type="ChEBI" id="CHEBI:35915"/>
        <dbReference type="ChEBI" id="CHEBI:57643"/>
        <dbReference type="ChEBI" id="CHEBI:58168"/>
        <dbReference type="EC" id="2.3.1.43"/>
    </reaction>
</comment>
<comment type="activity regulation">
    <text evidence="1">APOA1 is the most potent activator in plasma. Also activated by APOE, APOC1 and APOA4 (By similarity).</text>
</comment>
<comment type="subcellular location">
    <subcellularLocation>
        <location evidence="2">Secreted</location>
    </subcellularLocation>
    <text evidence="2">Secreted into blood plasma. Produced in astrocytes and secreted into cerebral spinal fluid (CSF) (By similarity).</text>
</comment>
<comment type="similarity">
    <text evidence="5">Belongs to the AB hydrolase superfamily. Lipase family.</text>
</comment>
<keyword id="KW-0012">Acyltransferase</keyword>
<keyword id="KW-0153">Cholesterol metabolism</keyword>
<keyword id="KW-1015">Disulfide bond</keyword>
<keyword id="KW-0325">Glycoprotein</keyword>
<keyword id="KW-0443">Lipid metabolism</keyword>
<keyword id="KW-0964">Secreted</keyword>
<keyword id="KW-0753">Steroid metabolism</keyword>
<keyword id="KW-1207">Sterol metabolism</keyword>
<keyword id="KW-0808">Transferase</keyword>
<organism>
    <name type="scientific">Gerbilliscus gambianus</name>
    <name type="common">Gambian gerbil</name>
    <name type="synonym">Gerbilliscus kempi gambiana</name>
    <dbReference type="NCBI Taxonomy" id="41264"/>
    <lineage>
        <taxon>Eukaryota</taxon>
        <taxon>Metazoa</taxon>
        <taxon>Chordata</taxon>
        <taxon>Craniata</taxon>
        <taxon>Vertebrata</taxon>
        <taxon>Euteleostomi</taxon>
        <taxon>Mammalia</taxon>
        <taxon>Eutheria</taxon>
        <taxon>Euarchontoglires</taxon>
        <taxon>Glires</taxon>
        <taxon>Rodentia</taxon>
        <taxon>Myomorpha</taxon>
        <taxon>Muroidea</taxon>
        <taxon>Muridae</taxon>
        <taxon>Gerbillinae</taxon>
        <taxon>Gerbilliscus</taxon>
    </lineage>
</organism>
<evidence type="ECO:0000250" key="1"/>
<evidence type="ECO:0000250" key="2">
    <source>
        <dbReference type="UniProtKB" id="P04180"/>
    </source>
</evidence>
<evidence type="ECO:0000255" key="3"/>
<evidence type="ECO:0000255" key="4">
    <source>
        <dbReference type="PROSITE-ProRule" id="PRU10037"/>
    </source>
</evidence>
<evidence type="ECO:0000305" key="5"/>
<protein>
    <recommendedName>
        <fullName>Phosphatidylcholine-sterol acyltransferase</fullName>
        <ecNumber evidence="2">2.3.1.43</ecNumber>
    </recommendedName>
    <alternativeName>
        <fullName>Lecithin-cholesterol acyltransferase</fullName>
    </alternativeName>
    <alternativeName>
        <fullName>Phospholipid-cholesterol acyltransferase</fullName>
    </alternativeName>
</protein>